<feature type="chain" id="PRO_1000050227" description="4-hydroxy-tetrahydrodipicolinate synthase">
    <location>
        <begin position="1"/>
        <end position="300"/>
    </location>
</feature>
<feature type="active site" description="Proton donor/acceptor" evidence="1">
    <location>
        <position position="143"/>
    </location>
</feature>
<feature type="active site" description="Schiff-base intermediate with substrate" evidence="1">
    <location>
        <position position="171"/>
    </location>
</feature>
<feature type="binding site" evidence="1">
    <location>
        <position position="55"/>
    </location>
    <ligand>
        <name>pyruvate</name>
        <dbReference type="ChEBI" id="CHEBI:15361"/>
    </ligand>
</feature>
<feature type="binding site" evidence="1">
    <location>
        <position position="211"/>
    </location>
    <ligand>
        <name>pyruvate</name>
        <dbReference type="ChEBI" id="CHEBI:15361"/>
    </ligand>
</feature>
<feature type="site" description="Part of a proton relay during catalysis" evidence="1">
    <location>
        <position position="54"/>
    </location>
</feature>
<feature type="site" description="Part of a proton relay during catalysis" evidence="1">
    <location>
        <position position="117"/>
    </location>
</feature>
<comment type="function">
    <text evidence="1">Catalyzes the condensation of (S)-aspartate-beta-semialdehyde [(S)-ASA] and pyruvate to 4-hydroxy-tetrahydrodipicolinate (HTPA).</text>
</comment>
<comment type="catalytic activity">
    <reaction evidence="1">
        <text>L-aspartate 4-semialdehyde + pyruvate = (2S,4S)-4-hydroxy-2,3,4,5-tetrahydrodipicolinate + H2O + H(+)</text>
        <dbReference type="Rhea" id="RHEA:34171"/>
        <dbReference type="ChEBI" id="CHEBI:15361"/>
        <dbReference type="ChEBI" id="CHEBI:15377"/>
        <dbReference type="ChEBI" id="CHEBI:15378"/>
        <dbReference type="ChEBI" id="CHEBI:67139"/>
        <dbReference type="ChEBI" id="CHEBI:537519"/>
        <dbReference type="EC" id="4.3.3.7"/>
    </reaction>
</comment>
<comment type="pathway">
    <text evidence="1">Amino-acid biosynthesis; L-lysine biosynthesis via DAP pathway; (S)-tetrahydrodipicolinate from L-aspartate: step 3/4.</text>
</comment>
<comment type="subunit">
    <text evidence="1">Homotetramer; dimer of dimers.</text>
</comment>
<comment type="subcellular location">
    <subcellularLocation>
        <location evidence="1">Cytoplasm</location>
    </subcellularLocation>
</comment>
<comment type="similarity">
    <text evidence="1">Belongs to the DapA family.</text>
</comment>
<comment type="caution">
    <text evidence="2">Was originally thought to be a dihydrodipicolinate synthase (DHDPS), catalyzing the condensation of (S)-aspartate-beta-semialdehyde [(S)-ASA] and pyruvate to dihydrodipicolinate (DHDP). However, it was shown in E.coli that the product of the enzymatic reaction is not dihydrodipicolinate but in fact (4S)-4-hydroxy-2,3,4,5-tetrahydro-(2S)-dipicolinic acid (HTPA), and that the consecutive dehydration reaction leading to DHDP is not spontaneous but catalyzed by DapB.</text>
</comment>
<sequence>MTTVGFDVAARLGTLLTAMVTPFSGDGSLDTATAARLANHLVDQGCDGLVVSGTTGESPTTTDGEKIELLRAVLEAVGDRARVIAGAGTYDTAHSIRLAKACAAEGAHGLLVVTPYYSKPPQRGLQAHFTAVADATELPMLLYDIPGRSAVPIEPDTIRALASHPNIVGVKDAKADLHSGAQIMADTGLAYYSGDDALNLPWLAMGATGFISVIAHLAAGQLRELLSAFGSGDIATARKINIAVAPLCNAMSRLGGVTLSKAGLRLQGIDVGDPRLPQVAATPEQIDALAADMRAASVLR</sequence>
<keyword id="KW-0028">Amino-acid biosynthesis</keyword>
<keyword id="KW-0963">Cytoplasm</keyword>
<keyword id="KW-0220">Diaminopimelate biosynthesis</keyword>
<keyword id="KW-0456">Lyase</keyword>
<keyword id="KW-0457">Lysine biosynthesis</keyword>
<keyword id="KW-1185">Reference proteome</keyword>
<keyword id="KW-0704">Schiff base</keyword>
<proteinExistence type="inferred from homology"/>
<protein>
    <recommendedName>
        <fullName evidence="1">4-hydroxy-tetrahydrodipicolinate synthase</fullName>
        <shortName evidence="1">HTPA synthase</shortName>
        <ecNumber evidence="1">4.3.3.7</ecNumber>
    </recommendedName>
</protein>
<dbReference type="EC" id="4.3.3.7" evidence="1"/>
<dbReference type="EMBL" id="CP000611">
    <property type="protein sequence ID" value="ABQ74556.1"/>
    <property type="molecule type" value="Genomic_DNA"/>
</dbReference>
<dbReference type="RefSeq" id="WP_003900564.1">
    <property type="nucleotide sequence ID" value="NZ_CP016972.1"/>
</dbReference>
<dbReference type="SMR" id="A5U6A6"/>
<dbReference type="GeneID" id="45426740"/>
<dbReference type="KEGG" id="mra:MRA_2778"/>
<dbReference type="eggNOG" id="COG0329">
    <property type="taxonomic scope" value="Bacteria"/>
</dbReference>
<dbReference type="HOGENOM" id="CLU_049343_7_1_11"/>
<dbReference type="UniPathway" id="UPA00034">
    <property type="reaction ID" value="UER00017"/>
</dbReference>
<dbReference type="Proteomes" id="UP000001988">
    <property type="component" value="Chromosome"/>
</dbReference>
<dbReference type="GO" id="GO:0005829">
    <property type="term" value="C:cytosol"/>
    <property type="evidence" value="ECO:0007669"/>
    <property type="project" value="TreeGrafter"/>
</dbReference>
<dbReference type="GO" id="GO:0008840">
    <property type="term" value="F:4-hydroxy-tetrahydrodipicolinate synthase activity"/>
    <property type="evidence" value="ECO:0007669"/>
    <property type="project" value="UniProtKB-UniRule"/>
</dbReference>
<dbReference type="GO" id="GO:0019877">
    <property type="term" value="P:diaminopimelate biosynthetic process"/>
    <property type="evidence" value="ECO:0007669"/>
    <property type="project" value="UniProtKB-UniRule"/>
</dbReference>
<dbReference type="GO" id="GO:0009089">
    <property type="term" value="P:lysine biosynthetic process via diaminopimelate"/>
    <property type="evidence" value="ECO:0007669"/>
    <property type="project" value="UniProtKB-UniRule"/>
</dbReference>
<dbReference type="CDD" id="cd00950">
    <property type="entry name" value="DHDPS"/>
    <property type="match status" value="1"/>
</dbReference>
<dbReference type="FunFam" id="3.20.20.70:FF:000273">
    <property type="entry name" value="4-hydroxy-tetrahydrodipicolinate synthase"/>
    <property type="match status" value="1"/>
</dbReference>
<dbReference type="Gene3D" id="3.20.20.70">
    <property type="entry name" value="Aldolase class I"/>
    <property type="match status" value="1"/>
</dbReference>
<dbReference type="HAMAP" id="MF_00418">
    <property type="entry name" value="DapA"/>
    <property type="match status" value="1"/>
</dbReference>
<dbReference type="InterPro" id="IPR013785">
    <property type="entry name" value="Aldolase_TIM"/>
</dbReference>
<dbReference type="InterPro" id="IPR005263">
    <property type="entry name" value="DapA"/>
</dbReference>
<dbReference type="InterPro" id="IPR002220">
    <property type="entry name" value="DapA-like"/>
</dbReference>
<dbReference type="InterPro" id="IPR020625">
    <property type="entry name" value="Schiff_base-form_aldolases_AS"/>
</dbReference>
<dbReference type="InterPro" id="IPR020624">
    <property type="entry name" value="Schiff_base-form_aldolases_CS"/>
</dbReference>
<dbReference type="NCBIfam" id="TIGR00674">
    <property type="entry name" value="dapA"/>
    <property type="match status" value="1"/>
</dbReference>
<dbReference type="PANTHER" id="PTHR12128:SF66">
    <property type="entry name" value="4-HYDROXY-2-OXOGLUTARATE ALDOLASE, MITOCHONDRIAL"/>
    <property type="match status" value="1"/>
</dbReference>
<dbReference type="PANTHER" id="PTHR12128">
    <property type="entry name" value="DIHYDRODIPICOLINATE SYNTHASE"/>
    <property type="match status" value="1"/>
</dbReference>
<dbReference type="Pfam" id="PF00701">
    <property type="entry name" value="DHDPS"/>
    <property type="match status" value="1"/>
</dbReference>
<dbReference type="PIRSF" id="PIRSF001365">
    <property type="entry name" value="DHDPS"/>
    <property type="match status" value="1"/>
</dbReference>
<dbReference type="PRINTS" id="PR00146">
    <property type="entry name" value="DHPICSNTHASE"/>
</dbReference>
<dbReference type="SMART" id="SM01130">
    <property type="entry name" value="DHDPS"/>
    <property type="match status" value="1"/>
</dbReference>
<dbReference type="SUPFAM" id="SSF51569">
    <property type="entry name" value="Aldolase"/>
    <property type="match status" value="1"/>
</dbReference>
<dbReference type="PROSITE" id="PS00665">
    <property type="entry name" value="DHDPS_1"/>
    <property type="match status" value="1"/>
</dbReference>
<dbReference type="PROSITE" id="PS00666">
    <property type="entry name" value="DHDPS_2"/>
    <property type="match status" value="1"/>
</dbReference>
<evidence type="ECO:0000255" key="1">
    <source>
        <dbReference type="HAMAP-Rule" id="MF_00418"/>
    </source>
</evidence>
<evidence type="ECO:0000305" key="2"/>
<gene>
    <name evidence="1" type="primary">dapA</name>
    <name type="ordered locus">MRA_2778</name>
</gene>
<reference key="1">
    <citation type="journal article" date="2008" name="PLoS ONE">
        <title>Genetic basis of virulence attenuation revealed by comparative genomic analysis of Mycobacterium tuberculosis strain H37Ra versus H37Rv.</title>
        <authorList>
            <person name="Zheng H."/>
            <person name="Lu L."/>
            <person name="Wang B."/>
            <person name="Pu S."/>
            <person name="Zhang X."/>
            <person name="Zhu G."/>
            <person name="Shi W."/>
            <person name="Zhang L."/>
            <person name="Wang H."/>
            <person name="Wang S."/>
            <person name="Zhao G."/>
            <person name="Zhang Y."/>
        </authorList>
    </citation>
    <scope>NUCLEOTIDE SEQUENCE [LARGE SCALE GENOMIC DNA]</scope>
    <source>
        <strain>ATCC 25177 / H37Ra</strain>
    </source>
</reference>
<organism>
    <name type="scientific">Mycobacterium tuberculosis (strain ATCC 25177 / H37Ra)</name>
    <dbReference type="NCBI Taxonomy" id="419947"/>
    <lineage>
        <taxon>Bacteria</taxon>
        <taxon>Bacillati</taxon>
        <taxon>Actinomycetota</taxon>
        <taxon>Actinomycetes</taxon>
        <taxon>Mycobacteriales</taxon>
        <taxon>Mycobacteriaceae</taxon>
        <taxon>Mycobacterium</taxon>
        <taxon>Mycobacterium tuberculosis complex</taxon>
    </lineage>
</organism>
<accession>A5U6A6</accession>
<name>DAPA_MYCTA</name>